<protein>
    <recommendedName>
        <fullName>Cysteine--tRNA ligase</fullName>
        <ecNumber>6.1.1.16</ecNumber>
    </recommendedName>
    <alternativeName>
        <fullName>Cysteinyl-tRNA synthetase</fullName>
        <shortName>CysRS</shortName>
    </alternativeName>
</protein>
<gene>
    <name type="ordered locus">ECU08_0490</name>
</gene>
<accession>Q8SRE0</accession>
<organism>
    <name type="scientific">Encephalitozoon cuniculi (strain GB-M1)</name>
    <name type="common">Microsporidian parasite</name>
    <dbReference type="NCBI Taxonomy" id="284813"/>
    <lineage>
        <taxon>Eukaryota</taxon>
        <taxon>Fungi</taxon>
        <taxon>Fungi incertae sedis</taxon>
        <taxon>Microsporidia</taxon>
        <taxon>Unikaryonidae</taxon>
        <taxon>Encephalitozoon</taxon>
    </lineage>
</organism>
<reference key="1">
    <citation type="journal article" date="2001" name="Nature">
        <title>Genome sequence and gene compaction of the eukaryote parasite Encephalitozoon cuniculi.</title>
        <authorList>
            <person name="Katinka M.D."/>
            <person name="Duprat S."/>
            <person name="Cornillot E."/>
            <person name="Metenier G."/>
            <person name="Thomarat F."/>
            <person name="Prensier G."/>
            <person name="Barbe V."/>
            <person name="Peyretaillade E."/>
            <person name="Brottier P."/>
            <person name="Wincker P."/>
            <person name="Delbac F."/>
            <person name="El Alaoui H."/>
            <person name="Peyret P."/>
            <person name="Saurin W."/>
            <person name="Gouy M."/>
            <person name="Weissenbach J."/>
            <person name="Vivares C.P."/>
        </authorList>
    </citation>
    <scope>NUCLEOTIDE SEQUENCE [LARGE SCALE GENOMIC DNA]</scope>
    <source>
        <strain>GB-M1</strain>
    </source>
</reference>
<reference key="2">
    <citation type="journal article" date="2006" name="Proteomics">
        <title>Proteomic analysis of the eukaryotic parasite Encephalitozoon cuniculi (microsporidia): a reference map for proteins expressed in late sporogonial stages.</title>
        <authorList>
            <person name="Brosson D."/>
            <person name="Kuhn L."/>
            <person name="Delbac F."/>
            <person name="Garin J."/>
            <person name="Vivares C.P."/>
            <person name="Texier C."/>
        </authorList>
    </citation>
    <scope>IDENTIFICATION BY MASS SPECTROMETRY [LARGE SCALE ANALYSIS]</scope>
    <scope>DEVELOPMENTAL STAGE</scope>
</reference>
<name>SYC_ENCCU</name>
<feature type="chain" id="PRO_0000383143" description="Cysteine--tRNA ligase">
    <location>
        <begin position="1"/>
        <end position="480"/>
    </location>
</feature>
<feature type="short sequence motif" description="'HIGH' region">
    <location>
        <begin position="33"/>
        <end position="43"/>
    </location>
</feature>
<feature type="short sequence motif" description="'KMSKS' region">
    <location>
        <begin position="269"/>
        <end position="273"/>
    </location>
</feature>
<feature type="binding site" evidence="1">
    <location>
        <position position="31"/>
    </location>
    <ligand>
        <name>Zn(2+)</name>
        <dbReference type="ChEBI" id="CHEBI:29105"/>
    </ligand>
</feature>
<feature type="binding site" evidence="1">
    <location>
        <position position="211"/>
    </location>
    <ligand>
        <name>Zn(2+)</name>
        <dbReference type="ChEBI" id="CHEBI:29105"/>
    </ligand>
</feature>
<feature type="binding site" evidence="1">
    <location>
        <position position="236"/>
    </location>
    <ligand>
        <name>Zn(2+)</name>
        <dbReference type="ChEBI" id="CHEBI:29105"/>
    </ligand>
</feature>
<feature type="binding site" evidence="1">
    <location>
        <position position="240"/>
    </location>
    <ligand>
        <name>Zn(2+)</name>
        <dbReference type="ChEBI" id="CHEBI:29105"/>
    </ligand>
</feature>
<feature type="binding site" evidence="1">
    <location>
        <position position="272"/>
    </location>
    <ligand>
        <name>ATP</name>
        <dbReference type="ChEBI" id="CHEBI:30616"/>
    </ligand>
</feature>
<proteinExistence type="evidence at protein level"/>
<keyword id="KW-0030">Aminoacyl-tRNA synthetase</keyword>
<keyword id="KW-0067">ATP-binding</keyword>
<keyword id="KW-0436">Ligase</keyword>
<keyword id="KW-0479">Metal-binding</keyword>
<keyword id="KW-0547">Nucleotide-binding</keyword>
<keyword id="KW-0648">Protein biosynthesis</keyword>
<keyword id="KW-1185">Reference proteome</keyword>
<keyword id="KW-0862">Zinc</keyword>
<evidence type="ECO:0000250" key="1"/>
<evidence type="ECO:0000269" key="2">
    <source>
    </source>
</evidence>
<evidence type="ECO:0000305" key="3"/>
<dbReference type="EC" id="6.1.1.16"/>
<dbReference type="EMBL" id="AL590448">
    <property type="protein sequence ID" value="CAD26354.1"/>
    <property type="molecule type" value="Genomic_DNA"/>
</dbReference>
<dbReference type="RefSeq" id="NP_597178.1">
    <property type="nucleotide sequence ID" value="NM_001041787.1"/>
</dbReference>
<dbReference type="SMR" id="Q8SRE0"/>
<dbReference type="FunCoup" id="Q8SRE0">
    <property type="interactions" value="234"/>
</dbReference>
<dbReference type="STRING" id="284813.Q8SRE0"/>
<dbReference type="GeneID" id="859600"/>
<dbReference type="KEGG" id="ecu:ECU08_0490"/>
<dbReference type="VEuPathDB" id="MicrosporidiaDB:ECU08_0490"/>
<dbReference type="HOGENOM" id="CLU_013528_0_3_1"/>
<dbReference type="InParanoid" id="Q8SRE0"/>
<dbReference type="OMA" id="HAWPASE"/>
<dbReference type="OrthoDB" id="438179at2759"/>
<dbReference type="Proteomes" id="UP000000819">
    <property type="component" value="Chromosome VIII"/>
</dbReference>
<dbReference type="GO" id="GO:0005737">
    <property type="term" value="C:cytoplasm"/>
    <property type="evidence" value="ECO:0007669"/>
    <property type="project" value="TreeGrafter"/>
</dbReference>
<dbReference type="GO" id="GO:0005524">
    <property type="term" value="F:ATP binding"/>
    <property type="evidence" value="ECO:0007669"/>
    <property type="project" value="UniProtKB-KW"/>
</dbReference>
<dbReference type="GO" id="GO:0004817">
    <property type="term" value="F:cysteine-tRNA ligase activity"/>
    <property type="evidence" value="ECO:0007669"/>
    <property type="project" value="UniProtKB-EC"/>
</dbReference>
<dbReference type="GO" id="GO:0046872">
    <property type="term" value="F:metal ion binding"/>
    <property type="evidence" value="ECO:0007669"/>
    <property type="project" value="UniProtKB-KW"/>
</dbReference>
<dbReference type="GO" id="GO:0006423">
    <property type="term" value="P:cysteinyl-tRNA aminoacylation"/>
    <property type="evidence" value="ECO:0007669"/>
    <property type="project" value="InterPro"/>
</dbReference>
<dbReference type="CDD" id="cd00672">
    <property type="entry name" value="CysRS_core"/>
    <property type="match status" value="1"/>
</dbReference>
<dbReference type="FunFam" id="3.40.50.620:FF:000027">
    <property type="entry name" value="Cysteine--tRNA ligase, cytoplasmic"/>
    <property type="match status" value="1"/>
</dbReference>
<dbReference type="Gene3D" id="1.20.120.1910">
    <property type="entry name" value="Cysteine-tRNA ligase, C-terminal anti-codon recognition domain"/>
    <property type="match status" value="1"/>
</dbReference>
<dbReference type="Gene3D" id="3.40.50.620">
    <property type="entry name" value="HUPs"/>
    <property type="match status" value="1"/>
</dbReference>
<dbReference type="HAMAP" id="MF_00041">
    <property type="entry name" value="Cys_tRNA_synth"/>
    <property type="match status" value="1"/>
</dbReference>
<dbReference type="InterPro" id="IPR015803">
    <property type="entry name" value="Cys-tRNA-ligase"/>
</dbReference>
<dbReference type="InterPro" id="IPR024909">
    <property type="entry name" value="Cys-tRNA/MSH_ligase"/>
</dbReference>
<dbReference type="InterPro" id="IPR014729">
    <property type="entry name" value="Rossmann-like_a/b/a_fold"/>
</dbReference>
<dbReference type="InterPro" id="IPR032678">
    <property type="entry name" value="tRNA-synt_1_cat_dom"/>
</dbReference>
<dbReference type="InterPro" id="IPR009080">
    <property type="entry name" value="tRNAsynth_Ia_anticodon-bd"/>
</dbReference>
<dbReference type="NCBIfam" id="TIGR00435">
    <property type="entry name" value="cysS"/>
    <property type="match status" value="1"/>
</dbReference>
<dbReference type="PANTHER" id="PTHR10890:SF27">
    <property type="entry name" value="CYSTEINE--TRNA LIGASE, MITOCHONDRIAL-RELATED"/>
    <property type="match status" value="1"/>
</dbReference>
<dbReference type="PANTHER" id="PTHR10890">
    <property type="entry name" value="CYSTEINYL-TRNA SYNTHETASE"/>
    <property type="match status" value="1"/>
</dbReference>
<dbReference type="Pfam" id="PF01406">
    <property type="entry name" value="tRNA-synt_1e"/>
    <property type="match status" value="1"/>
</dbReference>
<dbReference type="PRINTS" id="PR00983">
    <property type="entry name" value="TRNASYNTHCYS"/>
</dbReference>
<dbReference type="SUPFAM" id="SSF47323">
    <property type="entry name" value="Anticodon-binding domain of a subclass of class I aminoacyl-tRNA synthetases"/>
    <property type="match status" value="1"/>
</dbReference>
<dbReference type="SUPFAM" id="SSF52374">
    <property type="entry name" value="Nucleotidylyl transferase"/>
    <property type="match status" value="1"/>
</dbReference>
<comment type="catalytic activity">
    <reaction>
        <text>tRNA(Cys) + L-cysteine + ATP = L-cysteinyl-tRNA(Cys) + AMP + diphosphate</text>
        <dbReference type="Rhea" id="RHEA:17773"/>
        <dbReference type="Rhea" id="RHEA-COMP:9661"/>
        <dbReference type="Rhea" id="RHEA-COMP:9679"/>
        <dbReference type="ChEBI" id="CHEBI:30616"/>
        <dbReference type="ChEBI" id="CHEBI:33019"/>
        <dbReference type="ChEBI" id="CHEBI:35235"/>
        <dbReference type="ChEBI" id="CHEBI:78442"/>
        <dbReference type="ChEBI" id="CHEBI:78517"/>
        <dbReference type="ChEBI" id="CHEBI:456215"/>
        <dbReference type="EC" id="6.1.1.16"/>
    </reaction>
</comment>
<comment type="cofactor">
    <cofactor evidence="1">
        <name>Zn(2+)</name>
        <dbReference type="ChEBI" id="CHEBI:29105"/>
    </cofactor>
    <text evidence="1">Binds 1 zinc ion per subunit.</text>
</comment>
<comment type="developmental stage">
    <text evidence="2">Expressed in late sporogonial stages.</text>
</comment>
<comment type="similarity">
    <text evidence="3">Belongs to the class-I aminoacyl-tRNA synthetase family.</text>
</comment>
<sequence>MDKTLKLYNSITRTIDIFTPRKGNEVKMYICGPTVYDSSHIGHARTYVMFDVIRRVLSDYLKYNVRFVMNITDIDDKIIARANETGASMEEVTRKYTEEFFEDMKTLNVRSPSFVTFVTSYVDKIVKFIEKLEANGLAYESRGSVYFDLNSYQQRYSYPLFKSKDGINSEGDENKDKRSPCDFVLWKRSKENEPRYESKWGHGRPGWHIECSVMSSDILGEDLDIHAGGVDLAFPHHENEIAQCQAYFMQEPWVKCFLHTGHLNISGLKMSKSLKNFTTIKEALKTISPRQLRVLFLHHQWNKDMNYEKEHLKFAETIEKKIFNFMSVAESMRKNALAFETLENADREVLRELGNVQEAVHAALLDNVDTPAVMKRIVEMINFTNARIKTISPSTVLVVKDYIKEITDVLGLSEEERQESPGEDLIAQLLSNFRESIREMARRKEPYSKFLEKCDWIRESIKDYGYIIEDNSEGSILRKK</sequence>